<proteinExistence type="inferred from homology"/>
<organism>
    <name type="scientific">Buchnera aphidicola subsp. Schlechtendalia chinensis</name>
    <dbReference type="NCBI Taxonomy" id="118110"/>
    <lineage>
        <taxon>Bacteria</taxon>
        <taxon>Pseudomonadati</taxon>
        <taxon>Pseudomonadota</taxon>
        <taxon>Gammaproteobacteria</taxon>
        <taxon>Enterobacterales</taxon>
        <taxon>Erwiniaceae</taxon>
        <taxon>Buchnera</taxon>
    </lineage>
</organism>
<keyword id="KW-0028">Amino-acid biosynthesis</keyword>
<keyword id="KW-0368">Histidine biosynthesis</keyword>
<keyword id="KW-0479">Metal-binding</keyword>
<keyword id="KW-0520">NAD</keyword>
<keyword id="KW-0560">Oxidoreductase</keyword>
<keyword id="KW-0862">Zinc</keyword>
<accession>Q9RQ85</accession>
<sequence>MHNILEVIYWNKCSYERKKKILSRPIISNRFLIRNKVKEIISNVKSFGDRALYNYTNVFDNINLKNIRVSEEDIVSSHLHVSKELKLAVEVAFKNIKKFHSKQNVGSFNLKVQDNIYCQQIIRPIESIGLYIPNGSAPLLSTVLMLAIPANIAGCKRIMLCSPPPIMNEILYACKICEIKDVFQIGGAQAIAALGCGTETI</sequence>
<feature type="chain" id="PRO_0000135747" description="Histidinol dehydrogenase">
    <location>
        <begin position="1"/>
        <end position="201" status="greater than"/>
    </location>
</feature>
<feature type="non-terminal residue">
    <location>
        <position position="201"/>
    </location>
</feature>
<evidence type="ECO:0000250" key="1"/>
<evidence type="ECO:0000305" key="2"/>
<name>HISX_BUCSC</name>
<comment type="function">
    <text evidence="1">Catalyzes the sequential NAD-dependent oxidations of L-histidinol to L-histidinaldehyde and then to L-histidine.</text>
</comment>
<comment type="catalytic activity">
    <reaction>
        <text>L-histidinol + 2 NAD(+) + H2O = L-histidine + 2 NADH + 3 H(+)</text>
        <dbReference type="Rhea" id="RHEA:20641"/>
        <dbReference type="ChEBI" id="CHEBI:15377"/>
        <dbReference type="ChEBI" id="CHEBI:15378"/>
        <dbReference type="ChEBI" id="CHEBI:57540"/>
        <dbReference type="ChEBI" id="CHEBI:57595"/>
        <dbReference type="ChEBI" id="CHEBI:57699"/>
        <dbReference type="ChEBI" id="CHEBI:57945"/>
        <dbReference type="EC" id="1.1.1.23"/>
    </reaction>
</comment>
<comment type="cofactor">
    <cofactor evidence="1">
        <name>Zn(2+)</name>
        <dbReference type="ChEBI" id="CHEBI:29105"/>
    </cofactor>
    <text evidence="1">Binds 1 zinc ion per subunit.</text>
</comment>
<comment type="pathway">
    <text>Amino-acid biosynthesis; L-histidine biosynthesis; L-histidine from 5-phospho-alpha-D-ribose 1-diphosphate: step 9/9.</text>
</comment>
<comment type="subunit">
    <text evidence="1">Homodimer.</text>
</comment>
<comment type="similarity">
    <text evidence="2">Belongs to the histidinol dehydrogenase family.</text>
</comment>
<gene>
    <name type="primary">hisD</name>
</gene>
<reference key="1">
    <citation type="journal article" date="1999" name="Mol. Biol. Evol.">
        <title>Sequence evolution in bacterial endosymbionts having extreme base compositions.</title>
        <authorList>
            <person name="Clark M.A."/>
            <person name="Moran N.A."/>
            <person name="Baumann P."/>
        </authorList>
    </citation>
    <scope>NUCLEOTIDE SEQUENCE [GENOMIC DNA]</scope>
</reference>
<dbReference type="EC" id="1.1.1.23"/>
<dbReference type="EMBL" id="AF129282">
    <property type="protein sequence ID" value="AAF13773.1"/>
    <property type="molecule type" value="Genomic_DNA"/>
</dbReference>
<dbReference type="SMR" id="Q9RQ85"/>
<dbReference type="STRING" id="118110.XW81_00470"/>
<dbReference type="UniPathway" id="UPA00031">
    <property type="reaction ID" value="UER00014"/>
</dbReference>
<dbReference type="GO" id="GO:0005829">
    <property type="term" value="C:cytosol"/>
    <property type="evidence" value="ECO:0007669"/>
    <property type="project" value="TreeGrafter"/>
</dbReference>
<dbReference type="GO" id="GO:0004399">
    <property type="term" value="F:histidinol dehydrogenase activity"/>
    <property type="evidence" value="ECO:0007669"/>
    <property type="project" value="UniProtKB-EC"/>
</dbReference>
<dbReference type="GO" id="GO:0046872">
    <property type="term" value="F:metal ion binding"/>
    <property type="evidence" value="ECO:0007669"/>
    <property type="project" value="UniProtKB-KW"/>
</dbReference>
<dbReference type="GO" id="GO:0051287">
    <property type="term" value="F:NAD binding"/>
    <property type="evidence" value="ECO:0007669"/>
    <property type="project" value="InterPro"/>
</dbReference>
<dbReference type="GO" id="GO:0000105">
    <property type="term" value="P:L-histidine biosynthetic process"/>
    <property type="evidence" value="ECO:0007669"/>
    <property type="project" value="UniProtKB-UniPathway"/>
</dbReference>
<dbReference type="Gene3D" id="1.20.5.1300">
    <property type="match status" value="1"/>
</dbReference>
<dbReference type="Gene3D" id="3.40.50.1980">
    <property type="entry name" value="Nitrogenase molybdenum iron protein domain"/>
    <property type="match status" value="1"/>
</dbReference>
<dbReference type="InterPro" id="IPR016161">
    <property type="entry name" value="Ald_DH/histidinol_DH"/>
</dbReference>
<dbReference type="InterPro" id="IPR012131">
    <property type="entry name" value="Hstdl_DH"/>
</dbReference>
<dbReference type="PANTHER" id="PTHR21256:SF2">
    <property type="entry name" value="HISTIDINE BIOSYNTHESIS TRIFUNCTIONAL PROTEIN"/>
    <property type="match status" value="1"/>
</dbReference>
<dbReference type="PANTHER" id="PTHR21256">
    <property type="entry name" value="HISTIDINOL DEHYDROGENASE HDH"/>
    <property type="match status" value="1"/>
</dbReference>
<dbReference type="Pfam" id="PF00815">
    <property type="entry name" value="Histidinol_dh"/>
    <property type="match status" value="1"/>
</dbReference>
<dbReference type="PRINTS" id="PR00083">
    <property type="entry name" value="HOLDHDRGNASE"/>
</dbReference>
<dbReference type="SUPFAM" id="SSF53720">
    <property type="entry name" value="ALDH-like"/>
    <property type="match status" value="1"/>
</dbReference>
<protein>
    <recommendedName>
        <fullName>Histidinol dehydrogenase</fullName>
        <shortName>HDH</shortName>
        <ecNumber>1.1.1.23</ecNumber>
    </recommendedName>
</protein>